<accession>Q8CTV2</accession>
<sequence length="270" mass="32171">MNNTIISMKEKELRFLKFFHQQKYNVVDFNLIEELDWRRLTHEDLQQMDERSFWQQNKSIYALRNDFTDQLFRYYSNYPTHLKKVAYAGDIIRDNRVIKQVGIENYEPQFDNITQNFLDFQYFIQNVLHDDIQFVILGHYQLIDALLEKNHQTREVMEMIEERNLSGLIQKLTFNHPIIQILKENTLNQLKILSHYLPERHPAMVAIQSWAQWFTDHGITEIHLDVTAQAPRSYYKGIFIKCHLKNTTHSVLTGGYYHGSLEGFGLGLTL</sequence>
<keyword id="KW-0028">Amino-acid biosynthesis</keyword>
<keyword id="KW-0963">Cytoplasm</keyword>
<keyword id="KW-0368">Histidine biosynthesis</keyword>
<comment type="function">
    <text evidence="1">Required for the first step of histidine biosynthesis. May allow the feedback regulation of ATP phosphoribosyltransferase activity by histidine (By similarity).</text>
</comment>
<comment type="pathway">
    <text>Amino-acid biosynthesis; L-histidine biosynthesis; L-histidine from 5-phospho-alpha-D-ribose 1-diphosphate: step 1/9.</text>
</comment>
<comment type="subunit">
    <text evidence="1">Heteromultimer composed of HisG and HisZ subunits.</text>
</comment>
<comment type="subcellular location">
    <subcellularLocation>
        <location evidence="1">Cytoplasm</location>
    </subcellularLocation>
</comment>
<comment type="miscellaneous">
    <text>This function is generally fulfilled by the C-terminal part of HisG, which is missing in some bacteria such as this one.</text>
</comment>
<comment type="similarity">
    <text evidence="2">Belongs to the class-II aminoacyl-tRNA synthetase family. HisZ subfamily.</text>
</comment>
<feature type="chain" id="PRO_0000171065" description="ATP phosphoribosyltransferase regulatory subunit">
    <location>
        <begin position="1"/>
        <end position="270"/>
    </location>
</feature>
<reference key="1">
    <citation type="journal article" date="2003" name="Mol. Microbiol.">
        <title>Genome-based analysis of virulence genes in a non-biofilm-forming Staphylococcus epidermidis strain (ATCC 12228).</title>
        <authorList>
            <person name="Zhang Y.-Q."/>
            <person name="Ren S.-X."/>
            <person name="Li H.-L."/>
            <person name="Wang Y.-X."/>
            <person name="Fu G."/>
            <person name="Yang J."/>
            <person name="Qin Z.-Q."/>
            <person name="Miao Y.-G."/>
            <person name="Wang W.-Y."/>
            <person name="Chen R.-S."/>
            <person name="Shen Y."/>
            <person name="Chen Z."/>
            <person name="Yuan Z.-H."/>
            <person name="Zhao G.-P."/>
            <person name="Qu D."/>
            <person name="Danchin A."/>
            <person name="Wen Y.-M."/>
        </authorList>
    </citation>
    <scope>NUCLEOTIDE SEQUENCE [LARGE SCALE GENOMIC DNA]</scope>
    <source>
        <strain>ATCC 12228 / FDA PCI 1200</strain>
    </source>
</reference>
<dbReference type="EMBL" id="AE015929">
    <property type="protein sequence ID" value="AAO03867.1"/>
    <property type="molecule type" value="Genomic_DNA"/>
</dbReference>
<dbReference type="RefSeq" id="NP_763825.1">
    <property type="nucleotide sequence ID" value="NC_004461.1"/>
</dbReference>
<dbReference type="RefSeq" id="WP_001829417.1">
    <property type="nucleotide sequence ID" value="NZ_WBME01000037.1"/>
</dbReference>
<dbReference type="SMR" id="Q8CTV2"/>
<dbReference type="KEGG" id="sep:SE_0270"/>
<dbReference type="PATRIC" id="fig|176280.10.peg.248"/>
<dbReference type="eggNOG" id="COG3705">
    <property type="taxonomic scope" value="Bacteria"/>
</dbReference>
<dbReference type="HOGENOM" id="CLU_089652_0_0_9"/>
<dbReference type="OrthoDB" id="2387597at2"/>
<dbReference type="UniPathway" id="UPA00031">
    <property type="reaction ID" value="UER00006"/>
</dbReference>
<dbReference type="Proteomes" id="UP000001411">
    <property type="component" value="Chromosome"/>
</dbReference>
<dbReference type="GO" id="GO:0005737">
    <property type="term" value="C:cytoplasm"/>
    <property type="evidence" value="ECO:0007669"/>
    <property type="project" value="UniProtKB-SubCell"/>
</dbReference>
<dbReference type="GO" id="GO:0140096">
    <property type="term" value="F:catalytic activity, acting on a protein"/>
    <property type="evidence" value="ECO:0007669"/>
    <property type="project" value="UniProtKB-ARBA"/>
</dbReference>
<dbReference type="GO" id="GO:0016740">
    <property type="term" value="F:transferase activity"/>
    <property type="evidence" value="ECO:0007669"/>
    <property type="project" value="UniProtKB-ARBA"/>
</dbReference>
<dbReference type="GO" id="GO:0000105">
    <property type="term" value="P:L-histidine biosynthetic process"/>
    <property type="evidence" value="ECO:0007669"/>
    <property type="project" value="UniProtKB-UniPathway"/>
</dbReference>
<dbReference type="Gene3D" id="3.30.930.10">
    <property type="entry name" value="Bira Bifunctional Protein, Domain 2"/>
    <property type="match status" value="1"/>
</dbReference>
<dbReference type="InterPro" id="IPR045864">
    <property type="entry name" value="aa-tRNA-synth_II/BPL/LPL"/>
</dbReference>
<dbReference type="InterPro" id="IPR041715">
    <property type="entry name" value="HisRS-like_core"/>
</dbReference>
<dbReference type="NCBIfam" id="NF008947">
    <property type="entry name" value="PRK12294.1"/>
    <property type="match status" value="1"/>
</dbReference>
<dbReference type="Pfam" id="PF13393">
    <property type="entry name" value="tRNA-synt_His"/>
    <property type="match status" value="1"/>
</dbReference>
<dbReference type="SUPFAM" id="SSF55681">
    <property type="entry name" value="Class II aaRS and biotin synthetases"/>
    <property type="match status" value="1"/>
</dbReference>
<proteinExistence type="inferred from homology"/>
<gene>
    <name type="primary">hisZ</name>
    <name type="ordered locus">SE_0270</name>
</gene>
<evidence type="ECO:0000250" key="1"/>
<evidence type="ECO:0000305" key="2"/>
<name>HISZ_STAES</name>
<protein>
    <recommendedName>
        <fullName>ATP phosphoribosyltransferase regulatory subunit</fullName>
    </recommendedName>
</protein>
<organism>
    <name type="scientific">Staphylococcus epidermidis (strain ATCC 12228 / FDA PCI 1200)</name>
    <dbReference type="NCBI Taxonomy" id="176280"/>
    <lineage>
        <taxon>Bacteria</taxon>
        <taxon>Bacillati</taxon>
        <taxon>Bacillota</taxon>
        <taxon>Bacilli</taxon>
        <taxon>Bacillales</taxon>
        <taxon>Staphylococcaceae</taxon>
        <taxon>Staphylococcus</taxon>
    </lineage>
</organism>